<comment type="function">
    <text evidence="2">Downstream effector protein for Rho-type small GTPases that plays a role in cell polarity and directional migration. Acts as an adapter protein, linking active Rho proteins to STK24 and STK26 kinases, and hence positively regulates Golgi reorientation in polarized cell migration upon Rho activation. Involved in the subcellular relocation of STK26 from the Golgi to cytoplasm punctae in a Rho- and PDCD10-dependent manner upon serum stimulation.</text>
</comment>
<comment type="subunit">
    <text evidence="2">Interacts (via N-terminus) with RHOA (GTP-bound form); this interaction links active RHOA to STK24 and STK26 kinases. Interacts with RHOB. Interacts with RHOC. Interacts (via C-terminus) with PDCD10; this interaction occurs in a Rho-independent manner. Interacts (via C-terminus) with STK24; this interaction occurs in a PDCD10-dependent and Rho-independent manner. Interacts (via C-terminus) with STK26; this interaction occurs in a PDCD10-dependent and Rho-independent manner. Interacts (via N-terminus) with 14-3-3 proteins; these interactions occur in a Rho-dependent manner.</text>
</comment>
<comment type="subcellular location">
    <subcellularLocation>
        <location evidence="5">Cytoplasm</location>
    </subcellularLocation>
    <subcellularLocation>
        <location evidence="2">Golgi apparatus</location>
    </subcellularLocation>
    <text evidence="2 5">Localizes to the podocyte major processes and cell body (PubMed:17251388). Colocalized with STK26 in the Golgi of serum-starved cells and relocated to cytoplasmic punctae, probably vesicular compartments, along with STK26 upon serum stimulation in a Rho- and PDCD10-dependent manner (By similarity).</text>
</comment>
<comment type="tissue specificity">
    <text evidence="5">Expressed in the kidney exclusively by glomerular podocytes.</text>
</comment>
<comment type="similarity">
    <text evidence="6">Belongs to the RIPOR family.</text>
</comment>
<comment type="sequence caution" evidence="6">
    <conflict type="erroneous initiation">
        <sequence resource="EMBL-CDS" id="AAH06820"/>
    </conflict>
    <text>Truncated N-terminus.</text>
</comment>
<comment type="sequence caution" evidence="6">
    <conflict type="erroneous initiation">
        <sequence resource="EMBL-CDS" id="AAH30451"/>
    </conflict>
    <text>Truncated N-terminus.</text>
</comment>
<comment type="sequence caution" evidence="6">
    <conflict type="erroneous initiation">
        <sequence resource="EMBL-CDS" id="BAB26677"/>
    </conflict>
    <text>Truncated N-terminus.</text>
</comment>
<comment type="sequence caution" evidence="6">
    <conflict type="erroneous initiation">
        <sequence resource="EMBL-CDS" id="BAC65855"/>
    </conflict>
    <text>Extended N-terminus.</text>
</comment>
<name>RIPR1_MOUSE</name>
<evidence type="ECO:0000250" key="1">
    <source>
        <dbReference type="UniProtKB" id="Q4FZU8"/>
    </source>
</evidence>
<evidence type="ECO:0000250" key="2">
    <source>
        <dbReference type="UniProtKB" id="Q6ZS17"/>
    </source>
</evidence>
<evidence type="ECO:0000255" key="3"/>
<evidence type="ECO:0000256" key="4">
    <source>
        <dbReference type="SAM" id="MobiDB-lite"/>
    </source>
</evidence>
<evidence type="ECO:0000269" key="5">
    <source>
    </source>
</evidence>
<evidence type="ECO:0000305" key="6"/>
<evidence type="ECO:0007744" key="7">
    <source>
    </source>
</evidence>
<evidence type="ECO:0007744" key="8">
    <source>
    </source>
</evidence>
<gene>
    <name evidence="2" type="primary">Ripor1</name>
    <name type="synonym">Fam65a</name>
    <name type="synonym">Kiaa1930</name>
</gene>
<organism>
    <name type="scientific">Mus musculus</name>
    <name type="common">Mouse</name>
    <dbReference type="NCBI Taxonomy" id="10090"/>
    <lineage>
        <taxon>Eukaryota</taxon>
        <taxon>Metazoa</taxon>
        <taxon>Chordata</taxon>
        <taxon>Craniata</taxon>
        <taxon>Vertebrata</taxon>
        <taxon>Euteleostomi</taxon>
        <taxon>Mammalia</taxon>
        <taxon>Eutheria</taxon>
        <taxon>Euarchontoglires</taxon>
        <taxon>Glires</taxon>
        <taxon>Rodentia</taxon>
        <taxon>Myomorpha</taxon>
        <taxon>Muroidea</taxon>
        <taxon>Muridae</taxon>
        <taxon>Murinae</taxon>
        <taxon>Mus</taxon>
        <taxon>Mus</taxon>
    </lineage>
</organism>
<feature type="chain" id="PRO_0000289111" description="Rho family-interacting cell polarization regulator 1">
    <location>
        <begin position="1"/>
        <end position="1223"/>
    </location>
</feature>
<feature type="region of interest" description="Disordered" evidence="4">
    <location>
        <begin position="371"/>
        <end position="411"/>
    </location>
</feature>
<feature type="region of interest" description="Disordered" evidence="4">
    <location>
        <begin position="566"/>
        <end position="771"/>
    </location>
</feature>
<feature type="region of interest" description="Disordered" evidence="4">
    <location>
        <begin position="856"/>
        <end position="887"/>
    </location>
</feature>
<feature type="coiled-coil region" evidence="3">
    <location>
        <begin position="83"/>
        <end position="112"/>
    </location>
</feature>
<feature type="compositionally biased region" description="Low complexity" evidence="4">
    <location>
        <begin position="376"/>
        <end position="391"/>
    </location>
</feature>
<feature type="compositionally biased region" description="Low complexity" evidence="4">
    <location>
        <begin position="399"/>
        <end position="411"/>
    </location>
</feature>
<feature type="compositionally biased region" description="Low complexity" evidence="4">
    <location>
        <begin position="566"/>
        <end position="586"/>
    </location>
</feature>
<feature type="compositionally biased region" description="Low complexity" evidence="4">
    <location>
        <begin position="595"/>
        <end position="655"/>
    </location>
</feature>
<feature type="compositionally biased region" description="Polar residues" evidence="4">
    <location>
        <begin position="656"/>
        <end position="665"/>
    </location>
</feature>
<feature type="compositionally biased region" description="Low complexity" evidence="4">
    <location>
        <begin position="673"/>
        <end position="688"/>
    </location>
</feature>
<feature type="compositionally biased region" description="Polar residues" evidence="4">
    <location>
        <begin position="693"/>
        <end position="703"/>
    </location>
</feature>
<feature type="compositionally biased region" description="Polar residues" evidence="4">
    <location>
        <begin position="725"/>
        <end position="741"/>
    </location>
</feature>
<feature type="compositionally biased region" description="Low complexity" evidence="4">
    <location>
        <begin position="748"/>
        <end position="767"/>
    </location>
</feature>
<feature type="compositionally biased region" description="Acidic residues" evidence="4">
    <location>
        <begin position="858"/>
        <end position="867"/>
    </location>
</feature>
<feature type="compositionally biased region" description="Basic and acidic residues" evidence="4">
    <location>
        <begin position="868"/>
        <end position="885"/>
    </location>
</feature>
<feature type="modified residue" description="Phosphoserine" evidence="8">
    <location>
        <position position="22"/>
    </location>
</feature>
<feature type="modified residue" description="Phosphoserine" evidence="2">
    <location>
        <position position="345"/>
    </location>
</feature>
<feature type="modified residue" description="Phosphoserine" evidence="8">
    <location>
        <position position="347"/>
    </location>
</feature>
<feature type="modified residue" description="Phosphothreonine" evidence="8">
    <location>
        <position position="351"/>
    </location>
</feature>
<feature type="modified residue" description="Phosphoserine" evidence="1">
    <location>
        <position position="451"/>
    </location>
</feature>
<feature type="modified residue" description="Phosphoserine" evidence="1">
    <location>
        <position position="454"/>
    </location>
</feature>
<feature type="modified residue" description="Phosphoserine" evidence="8">
    <location>
        <position position="468"/>
    </location>
</feature>
<feature type="modified residue" description="Phosphoserine" evidence="7 8">
    <location>
        <position position="748"/>
    </location>
</feature>
<feature type="modified residue" description="Phosphoserine" evidence="8">
    <location>
        <position position="874"/>
    </location>
</feature>
<feature type="modified residue" description="Phosphoserine" evidence="8">
    <location>
        <position position="875"/>
    </location>
</feature>
<feature type="sequence conflict" description="In Ref. 4; AAH79880." evidence="6" ref="4">
    <original>T</original>
    <variation>I</variation>
    <location>
        <position position="580"/>
    </location>
</feature>
<feature type="sequence conflict" description="In Ref. 4; AAH30451." evidence="6" ref="4">
    <original>Y</original>
    <variation>C</variation>
    <location>
        <position position="1060"/>
    </location>
</feature>
<dbReference type="EMBL" id="AK122573">
    <property type="protein sequence ID" value="BAC65855.1"/>
    <property type="status" value="ALT_INIT"/>
    <property type="molecule type" value="mRNA"/>
</dbReference>
<dbReference type="EMBL" id="AC127419">
    <property type="status" value="NOT_ANNOTATED_CDS"/>
    <property type="molecule type" value="Genomic_DNA"/>
</dbReference>
<dbReference type="EMBL" id="CH466525">
    <property type="protein sequence ID" value="EDL11288.1"/>
    <property type="molecule type" value="Genomic_DNA"/>
</dbReference>
<dbReference type="EMBL" id="BC006820">
    <property type="protein sequence ID" value="AAH06820.1"/>
    <property type="status" value="ALT_INIT"/>
    <property type="molecule type" value="mRNA"/>
</dbReference>
<dbReference type="EMBL" id="BC030451">
    <property type="protein sequence ID" value="AAH30451.1"/>
    <property type="status" value="ALT_INIT"/>
    <property type="molecule type" value="mRNA"/>
</dbReference>
<dbReference type="EMBL" id="BC079880">
    <property type="protein sequence ID" value="AAH79880.1"/>
    <property type="molecule type" value="mRNA"/>
</dbReference>
<dbReference type="EMBL" id="AK010063">
    <property type="protein sequence ID" value="BAB26677.1"/>
    <property type="status" value="ALT_INIT"/>
    <property type="molecule type" value="mRNA"/>
</dbReference>
<dbReference type="CCDS" id="CCDS52660.1"/>
<dbReference type="RefSeq" id="NP_001074710.2">
    <property type="nucleotide sequence ID" value="NM_001081241.2"/>
</dbReference>
<dbReference type="RefSeq" id="XP_006531525.1">
    <property type="nucleotide sequence ID" value="XM_006531462.3"/>
</dbReference>
<dbReference type="RefSeq" id="XP_036010244.1">
    <property type="nucleotide sequence ID" value="XM_036154351.1"/>
</dbReference>
<dbReference type="SMR" id="Q68FE6"/>
<dbReference type="BioGRID" id="217671">
    <property type="interactions" value="3"/>
</dbReference>
<dbReference type="FunCoup" id="Q68FE6">
    <property type="interactions" value="740"/>
</dbReference>
<dbReference type="STRING" id="10090.ENSMUSP00000039966"/>
<dbReference type="GlyGen" id="Q68FE6">
    <property type="glycosylation" value="5 sites, 1 N-linked glycan (1 site), 1 O-linked glycan (3 sites)"/>
</dbReference>
<dbReference type="iPTMnet" id="Q68FE6"/>
<dbReference type="PhosphoSitePlus" id="Q68FE6"/>
<dbReference type="SwissPalm" id="Q68FE6"/>
<dbReference type="jPOST" id="Q68FE6"/>
<dbReference type="PaxDb" id="10090-ENSMUSP00000039966"/>
<dbReference type="PeptideAtlas" id="Q68FE6"/>
<dbReference type="ProteomicsDB" id="253293"/>
<dbReference type="Pumba" id="Q68FE6"/>
<dbReference type="Antibodypedia" id="941">
    <property type="antibodies" value="37 antibodies from 14 providers"/>
</dbReference>
<dbReference type="Ensembl" id="ENSMUST00000043531.10">
    <property type="protein sequence ID" value="ENSMUSP00000039966.9"/>
    <property type="gene ID" value="ENSMUSG00000038604.10"/>
</dbReference>
<dbReference type="GeneID" id="75687"/>
<dbReference type="KEGG" id="mmu:75687"/>
<dbReference type="UCSC" id="uc009ndj.1">
    <property type="organism name" value="mouse"/>
</dbReference>
<dbReference type="AGR" id="MGI:1922937"/>
<dbReference type="CTD" id="79567"/>
<dbReference type="MGI" id="MGI:1922937">
    <property type="gene designation" value="Ripor1"/>
</dbReference>
<dbReference type="VEuPathDB" id="HostDB:ENSMUSG00000038604"/>
<dbReference type="eggNOG" id="ENOG502QQ7T">
    <property type="taxonomic scope" value="Eukaryota"/>
</dbReference>
<dbReference type="GeneTree" id="ENSGT00940000153717"/>
<dbReference type="HOGENOM" id="CLU_006211_0_0_1"/>
<dbReference type="InParanoid" id="Q68FE6"/>
<dbReference type="OMA" id="LPCIFGP"/>
<dbReference type="OrthoDB" id="9999654at2759"/>
<dbReference type="PhylomeDB" id="Q68FE6"/>
<dbReference type="TreeFam" id="TF329332"/>
<dbReference type="BioGRID-ORCS" id="75687">
    <property type="hits" value="2 hits in 77 CRISPR screens"/>
</dbReference>
<dbReference type="ChiTaRS" id="Ripor1">
    <property type="organism name" value="mouse"/>
</dbReference>
<dbReference type="PRO" id="PR:Q68FE6"/>
<dbReference type="Proteomes" id="UP000000589">
    <property type="component" value="Chromosome 8"/>
</dbReference>
<dbReference type="RNAct" id="Q68FE6">
    <property type="molecule type" value="protein"/>
</dbReference>
<dbReference type="Bgee" id="ENSMUSG00000038604">
    <property type="expression patterns" value="Expressed in gastrula and 244 other cell types or tissues"/>
</dbReference>
<dbReference type="GO" id="GO:0005737">
    <property type="term" value="C:cytoplasm"/>
    <property type="evidence" value="ECO:0000314"/>
    <property type="project" value="UniProtKB"/>
</dbReference>
<dbReference type="GO" id="GO:0005829">
    <property type="term" value="C:cytosol"/>
    <property type="evidence" value="ECO:0007669"/>
    <property type="project" value="Ensembl"/>
</dbReference>
<dbReference type="GO" id="GO:0005794">
    <property type="term" value="C:Golgi apparatus"/>
    <property type="evidence" value="ECO:0000250"/>
    <property type="project" value="UniProtKB"/>
</dbReference>
<dbReference type="GO" id="GO:0016020">
    <property type="term" value="C:membrane"/>
    <property type="evidence" value="ECO:0000250"/>
    <property type="project" value="UniProtKB"/>
</dbReference>
<dbReference type="GO" id="GO:0071889">
    <property type="term" value="F:14-3-3 protein binding"/>
    <property type="evidence" value="ECO:0000250"/>
    <property type="project" value="UniProtKB"/>
</dbReference>
<dbReference type="GO" id="GO:0009267">
    <property type="term" value="P:cellular response to starvation"/>
    <property type="evidence" value="ECO:0000250"/>
    <property type="project" value="UniProtKB"/>
</dbReference>
<dbReference type="GO" id="GO:0051683">
    <property type="term" value="P:establishment of Golgi localization"/>
    <property type="evidence" value="ECO:0000250"/>
    <property type="project" value="UniProtKB"/>
</dbReference>
<dbReference type="GO" id="GO:0030335">
    <property type="term" value="P:positive regulation of cell migration"/>
    <property type="evidence" value="ECO:0000250"/>
    <property type="project" value="UniProtKB"/>
</dbReference>
<dbReference type="GO" id="GO:0090316">
    <property type="term" value="P:positive regulation of intracellular protein transport"/>
    <property type="evidence" value="ECO:0000250"/>
    <property type="project" value="UniProtKB"/>
</dbReference>
<dbReference type="GO" id="GO:0034067">
    <property type="term" value="P:protein localization to Golgi apparatus"/>
    <property type="evidence" value="ECO:0000250"/>
    <property type="project" value="UniProtKB"/>
</dbReference>
<dbReference type="GO" id="GO:0009611">
    <property type="term" value="P:response to wounding"/>
    <property type="evidence" value="ECO:0000250"/>
    <property type="project" value="UniProtKB"/>
</dbReference>
<dbReference type="GO" id="GO:0007266">
    <property type="term" value="P:Rho protein signal transduction"/>
    <property type="evidence" value="ECO:0000250"/>
    <property type="project" value="UniProtKB"/>
</dbReference>
<dbReference type="FunFam" id="1.25.10.10:FF:000089">
    <property type="entry name" value="Rho family-interacting cell polarization regulator 1"/>
    <property type="match status" value="1"/>
</dbReference>
<dbReference type="Gene3D" id="1.25.10.10">
    <property type="entry name" value="Leucine-rich Repeat Variant"/>
    <property type="match status" value="1"/>
</dbReference>
<dbReference type="InterPro" id="IPR011989">
    <property type="entry name" value="ARM-like"/>
</dbReference>
<dbReference type="InterPro" id="IPR016024">
    <property type="entry name" value="ARM-type_fold"/>
</dbReference>
<dbReference type="InterPro" id="IPR031780">
    <property type="entry name" value="FAM65_N"/>
</dbReference>
<dbReference type="InterPro" id="IPR026136">
    <property type="entry name" value="RIPOR3"/>
</dbReference>
<dbReference type="PANTHER" id="PTHR15829">
    <property type="entry name" value="PROTEIN KINASE PKN/PRK1, EFFECTOR"/>
    <property type="match status" value="1"/>
</dbReference>
<dbReference type="PANTHER" id="PTHR15829:SF1">
    <property type="entry name" value="RHO FAMILY-INTERACTING CELL POLARIZATION REGULATOR 1"/>
    <property type="match status" value="1"/>
</dbReference>
<dbReference type="Pfam" id="PF15903">
    <property type="entry name" value="PL48"/>
    <property type="match status" value="1"/>
</dbReference>
<dbReference type="SUPFAM" id="SSF48371">
    <property type="entry name" value="ARM repeat"/>
    <property type="match status" value="1"/>
</dbReference>
<accession>Q68FE6</accession>
<accession>G5E8A2</accession>
<accession>Q80T73</accession>
<accession>Q8K0T1</accession>
<accession>Q9D6R4</accession>
<proteinExistence type="evidence at protein level"/>
<keyword id="KW-0175">Coiled coil</keyword>
<keyword id="KW-0963">Cytoplasm</keyword>
<keyword id="KW-0333">Golgi apparatus</keyword>
<keyword id="KW-0597">Phosphoprotein</keyword>
<keyword id="KW-1185">Reference proteome</keyword>
<sequence length="1223" mass="132352">MMSLSVRPQRRLLSARVSRSQSFAGVLGSHERGPRSFTVFSPPGPPRKPLVLSRVSRMFSVAHPAPKVPQPERLDLVYTALKRGLTAYLEVHQQEQEKLQRQIKESKRNSRLGFLYDLDKQVKSIERFLRRLEFHASKIDELYEAYCVQRRLRDGAYNMVRAYSTGSPGSREARDSLAEATRGHREYTESMCLLENELEAQLGEFHLRMKGLAGFARLCVGDQYEICMKYGRQRWKLRGRIESSGKQVWDSEETVFLPLLTEFLSIKVTELKGLANHVVVGSVSCETKDLFAALPQVVAVDINDLGTIKLSLEVIWSPFDKDDQPSAASTVNKASTVTKRFSTYSQSPPDTPSLREQAFYNMLRRQEELENGTAWSLSSESSDDSSSPQLSGTARHSTPKPLVQQPEPLPVQVAFRRPESLTSGSMDEEPAMTPSLVNGHAPYSRTLSHISEASVDAALTEAVEAVDSQSPIPGPSPLVYPDSTHVERVSSVLPVLNNGHSATSPALSTTGPAPTFIDPAPTTQLDLVHKTTDSAPSELPSITHTTTSSAYSAVSLVNSVPSLTSTTIGSAHTTTPSPLTSTGSVPNATDSTQATPSPTHSTPSPTHTTIRLTHTTVSPTHSSPSPIHTTPSPTHTTVSPTCTTPSSGHSTTSPTQEAKMSTHTTGAVGPVQTTTSPISTTESPSPSTDVAIISSSSAESTGPGTEPLPCSHPASPPYTKADPTASCTSYQSLASSGSKPLTSPAPDSPEQIPKSPSSSPSSSAPEPQHSEHNLAAVAQAPVPEATGGAGDRRLEEALGTLMSALDDYRGQFPELQGLEQEVTRLESLLMQRQGLTRSRASSLSITVEHALESFSFLNDDEDEDNDGPGDRHTSSPEVVAEDRLDSSNGQSLSTGCSALDATLVQHLYHCSRLLLKLGTFGPLRCQEAWALERLLREARVFQEVCERSKLWGNSATSAQEVVQFSASRPGFLTFWDQCTEGLSPFICSVERVLLTFCSQYGARLSLRQPGLAEAVCVKFLEDALGQKLPRRPQPGPGEQFTIFQFWSYVEALDSPSMDAYVTETAEEVLLVQNLNSDDQAVVLKALRLAPEGRLRKDGLRALSSLLVHGNNKVMAAVSTQLRSLSLGPVFRERALLCFLDQLEDGDVQTRVAGCLALGCIKAPEGIEPLVYLCQTDTEAVREAARQSLQQCGEEGQSAHRQLEESLDALPCIFGPSSMASTAF</sequence>
<protein>
    <recommendedName>
        <fullName evidence="2">Rho family-interacting cell polarization regulator 1</fullName>
    </recommendedName>
</protein>
<reference key="1">
    <citation type="journal article" date="2003" name="DNA Res.">
        <title>Prediction of the coding sequences of mouse homologues of KIAA gene: II. The complete nucleotide sequences of 400 mouse KIAA-homologous cDNAs identified by screening of terminal sequences of cDNA clones randomly sampled from size-fractionated libraries.</title>
        <authorList>
            <person name="Okazaki N."/>
            <person name="Kikuno R."/>
            <person name="Ohara R."/>
            <person name="Inamoto S."/>
            <person name="Aizawa H."/>
            <person name="Yuasa S."/>
            <person name="Nakajima D."/>
            <person name="Nagase T."/>
            <person name="Ohara O."/>
            <person name="Koga H."/>
        </authorList>
    </citation>
    <scope>NUCLEOTIDE SEQUENCE [LARGE SCALE MRNA]</scope>
    <source>
        <tissue>Brain</tissue>
    </source>
</reference>
<reference key="2">
    <citation type="journal article" date="2009" name="PLoS Biol.">
        <title>Lineage-specific biology revealed by a finished genome assembly of the mouse.</title>
        <authorList>
            <person name="Church D.M."/>
            <person name="Goodstadt L."/>
            <person name="Hillier L.W."/>
            <person name="Zody M.C."/>
            <person name="Goldstein S."/>
            <person name="She X."/>
            <person name="Bult C.J."/>
            <person name="Agarwala R."/>
            <person name="Cherry J.L."/>
            <person name="DiCuccio M."/>
            <person name="Hlavina W."/>
            <person name="Kapustin Y."/>
            <person name="Meric P."/>
            <person name="Maglott D."/>
            <person name="Birtle Z."/>
            <person name="Marques A.C."/>
            <person name="Graves T."/>
            <person name="Zhou S."/>
            <person name="Teague B."/>
            <person name="Potamousis K."/>
            <person name="Churas C."/>
            <person name="Place M."/>
            <person name="Herschleb J."/>
            <person name="Runnheim R."/>
            <person name="Forrest D."/>
            <person name="Amos-Landgraf J."/>
            <person name="Schwartz D.C."/>
            <person name="Cheng Z."/>
            <person name="Lindblad-Toh K."/>
            <person name="Eichler E.E."/>
            <person name="Ponting C.P."/>
        </authorList>
    </citation>
    <scope>NUCLEOTIDE SEQUENCE [LARGE SCALE GENOMIC DNA]</scope>
    <source>
        <strain>C57BL/6J</strain>
    </source>
</reference>
<reference key="3">
    <citation type="submission" date="2005-07" db="EMBL/GenBank/DDBJ databases">
        <authorList>
            <person name="Mural R.J."/>
            <person name="Adams M.D."/>
            <person name="Myers E.W."/>
            <person name="Smith H.O."/>
            <person name="Venter J.C."/>
        </authorList>
    </citation>
    <scope>NUCLEOTIDE SEQUENCE [LARGE SCALE GENOMIC DNA]</scope>
</reference>
<reference key="4">
    <citation type="journal article" date="2004" name="Genome Res.">
        <title>The status, quality, and expansion of the NIH full-length cDNA project: the Mammalian Gene Collection (MGC).</title>
        <authorList>
            <consortium name="The MGC Project Team"/>
        </authorList>
    </citation>
    <scope>NUCLEOTIDE SEQUENCE [LARGE SCALE MRNA]</scope>
    <source>
        <strain>C57BL/6J</strain>
        <tissue>Brain</tissue>
        <tissue>Eye</tissue>
    </source>
</reference>
<reference key="5">
    <citation type="journal article" date="2005" name="Science">
        <title>The transcriptional landscape of the mammalian genome.</title>
        <authorList>
            <person name="Carninci P."/>
            <person name="Kasukawa T."/>
            <person name="Katayama S."/>
            <person name="Gough J."/>
            <person name="Frith M.C."/>
            <person name="Maeda N."/>
            <person name="Oyama R."/>
            <person name="Ravasi T."/>
            <person name="Lenhard B."/>
            <person name="Wells C."/>
            <person name="Kodzius R."/>
            <person name="Shimokawa K."/>
            <person name="Bajic V.B."/>
            <person name="Brenner S.E."/>
            <person name="Batalov S."/>
            <person name="Forrest A.R."/>
            <person name="Zavolan M."/>
            <person name="Davis M.J."/>
            <person name="Wilming L.G."/>
            <person name="Aidinis V."/>
            <person name="Allen J.E."/>
            <person name="Ambesi-Impiombato A."/>
            <person name="Apweiler R."/>
            <person name="Aturaliya R.N."/>
            <person name="Bailey T.L."/>
            <person name="Bansal M."/>
            <person name="Baxter L."/>
            <person name="Beisel K.W."/>
            <person name="Bersano T."/>
            <person name="Bono H."/>
            <person name="Chalk A.M."/>
            <person name="Chiu K.P."/>
            <person name="Choudhary V."/>
            <person name="Christoffels A."/>
            <person name="Clutterbuck D.R."/>
            <person name="Crowe M.L."/>
            <person name="Dalla E."/>
            <person name="Dalrymple B.P."/>
            <person name="de Bono B."/>
            <person name="Della Gatta G."/>
            <person name="di Bernardo D."/>
            <person name="Down T."/>
            <person name="Engstrom P."/>
            <person name="Fagiolini M."/>
            <person name="Faulkner G."/>
            <person name="Fletcher C.F."/>
            <person name="Fukushima T."/>
            <person name="Furuno M."/>
            <person name="Futaki S."/>
            <person name="Gariboldi M."/>
            <person name="Georgii-Hemming P."/>
            <person name="Gingeras T.R."/>
            <person name="Gojobori T."/>
            <person name="Green R.E."/>
            <person name="Gustincich S."/>
            <person name="Harbers M."/>
            <person name="Hayashi Y."/>
            <person name="Hensch T.K."/>
            <person name="Hirokawa N."/>
            <person name="Hill D."/>
            <person name="Huminiecki L."/>
            <person name="Iacono M."/>
            <person name="Ikeo K."/>
            <person name="Iwama A."/>
            <person name="Ishikawa T."/>
            <person name="Jakt M."/>
            <person name="Kanapin A."/>
            <person name="Katoh M."/>
            <person name="Kawasawa Y."/>
            <person name="Kelso J."/>
            <person name="Kitamura H."/>
            <person name="Kitano H."/>
            <person name="Kollias G."/>
            <person name="Krishnan S.P."/>
            <person name="Kruger A."/>
            <person name="Kummerfeld S.K."/>
            <person name="Kurochkin I.V."/>
            <person name="Lareau L.F."/>
            <person name="Lazarevic D."/>
            <person name="Lipovich L."/>
            <person name="Liu J."/>
            <person name="Liuni S."/>
            <person name="McWilliam S."/>
            <person name="Madan Babu M."/>
            <person name="Madera M."/>
            <person name="Marchionni L."/>
            <person name="Matsuda H."/>
            <person name="Matsuzawa S."/>
            <person name="Miki H."/>
            <person name="Mignone F."/>
            <person name="Miyake S."/>
            <person name="Morris K."/>
            <person name="Mottagui-Tabar S."/>
            <person name="Mulder N."/>
            <person name="Nakano N."/>
            <person name="Nakauchi H."/>
            <person name="Ng P."/>
            <person name="Nilsson R."/>
            <person name="Nishiguchi S."/>
            <person name="Nishikawa S."/>
            <person name="Nori F."/>
            <person name="Ohara O."/>
            <person name="Okazaki Y."/>
            <person name="Orlando V."/>
            <person name="Pang K.C."/>
            <person name="Pavan W.J."/>
            <person name="Pavesi G."/>
            <person name="Pesole G."/>
            <person name="Petrovsky N."/>
            <person name="Piazza S."/>
            <person name="Reed J."/>
            <person name="Reid J.F."/>
            <person name="Ring B.Z."/>
            <person name="Ringwald M."/>
            <person name="Rost B."/>
            <person name="Ruan Y."/>
            <person name="Salzberg S.L."/>
            <person name="Sandelin A."/>
            <person name="Schneider C."/>
            <person name="Schoenbach C."/>
            <person name="Sekiguchi K."/>
            <person name="Semple C.A."/>
            <person name="Seno S."/>
            <person name="Sessa L."/>
            <person name="Sheng Y."/>
            <person name="Shibata Y."/>
            <person name="Shimada H."/>
            <person name="Shimada K."/>
            <person name="Silva D."/>
            <person name="Sinclair B."/>
            <person name="Sperling S."/>
            <person name="Stupka E."/>
            <person name="Sugiura K."/>
            <person name="Sultana R."/>
            <person name="Takenaka Y."/>
            <person name="Taki K."/>
            <person name="Tammoja K."/>
            <person name="Tan S.L."/>
            <person name="Tang S."/>
            <person name="Taylor M.S."/>
            <person name="Tegner J."/>
            <person name="Teichmann S.A."/>
            <person name="Ueda H.R."/>
            <person name="van Nimwegen E."/>
            <person name="Verardo R."/>
            <person name="Wei C.L."/>
            <person name="Yagi K."/>
            <person name="Yamanishi H."/>
            <person name="Zabarovsky E."/>
            <person name="Zhu S."/>
            <person name="Zimmer A."/>
            <person name="Hide W."/>
            <person name="Bult C."/>
            <person name="Grimmond S.M."/>
            <person name="Teasdale R.D."/>
            <person name="Liu E.T."/>
            <person name="Brusic V."/>
            <person name="Quackenbush J."/>
            <person name="Wahlestedt C."/>
            <person name="Mattick J.S."/>
            <person name="Hume D.A."/>
            <person name="Kai C."/>
            <person name="Sasaki D."/>
            <person name="Tomaru Y."/>
            <person name="Fukuda S."/>
            <person name="Kanamori-Katayama M."/>
            <person name="Suzuki M."/>
            <person name="Aoki J."/>
            <person name="Arakawa T."/>
            <person name="Iida J."/>
            <person name="Imamura K."/>
            <person name="Itoh M."/>
            <person name="Kato T."/>
            <person name="Kawaji H."/>
            <person name="Kawagashira N."/>
            <person name="Kawashima T."/>
            <person name="Kojima M."/>
            <person name="Kondo S."/>
            <person name="Konno H."/>
            <person name="Nakano K."/>
            <person name="Ninomiya N."/>
            <person name="Nishio T."/>
            <person name="Okada M."/>
            <person name="Plessy C."/>
            <person name="Shibata K."/>
            <person name="Shiraki T."/>
            <person name="Suzuki S."/>
            <person name="Tagami M."/>
            <person name="Waki K."/>
            <person name="Watahiki A."/>
            <person name="Okamura-Oho Y."/>
            <person name="Suzuki H."/>
            <person name="Kawai J."/>
            <person name="Hayashizaki Y."/>
        </authorList>
    </citation>
    <scope>NUCLEOTIDE SEQUENCE [LARGE SCALE MRNA] OF 1091-1223</scope>
    <source>
        <strain>C57BL/6J</strain>
        <tissue>Tongue</tissue>
    </source>
</reference>
<reference key="6">
    <citation type="journal article" date="2007" name="J. Am. Soc. Nephrol.">
        <title>Expression and subcellular distribution of novel glomerulus-associated proteins Dendrin, Ehd3, Sh2d4a, Plekhh2, and 2310066E14Rik.</title>
        <authorList>
            <person name="Patrakka J."/>
            <person name="Xiao Z."/>
            <person name="Nukui M."/>
            <person name="Takemoto M."/>
            <person name="He L."/>
            <person name="Oddsson A."/>
            <person name="Perisic L."/>
            <person name="Kaukinen A."/>
            <person name="Szigyarto C.A.-K."/>
            <person name="Uhlen M."/>
            <person name="Jalanko H."/>
            <person name="Betsholtz C."/>
            <person name="Tryggvason K."/>
        </authorList>
    </citation>
    <scope>SUBCELLULAR LOCATION</scope>
    <scope>TISSUE SPECIFICITY</scope>
</reference>
<reference key="7">
    <citation type="journal article" date="2007" name="Proc. Natl. Acad. Sci. U.S.A.">
        <title>Large-scale phosphorylation analysis of mouse liver.</title>
        <authorList>
            <person name="Villen J."/>
            <person name="Beausoleil S.A."/>
            <person name="Gerber S.A."/>
            <person name="Gygi S.P."/>
        </authorList>
    </citation>
    <scope>PHOSPHORYLATION [LARGE SCALE ANALYSIS] AT SER-748</scope>
    <scope>IDENTIFICATION BY MASS SPECTROMETRY [LARGE SCALE ANALYSIS]</scope>
    <source>
        <tissue>Liver</tissue>
    </source>
</reference>
<reference key="8">
    <citation type="journal article" date="2009" name="Immunity">
        <title>The phagosomal proteome in interferon-gamma-activated macrophages.</title>
        <authorList>
            <person name="Trost M."/>
            <person name="English L."/>
            <person name="Lemieux S."/>
            <person name="Courcelles M."/>
            <person name="Desjardins M."/>
            <person name="Thibault P."/>
        </authorList>
    </citation>
    <scope>IDENTIFICATION BY MASS SPECTROMETRY [LARGE SCALE ANALYSIS]</scope>
</reference>
<reference key="9">
    <citation type="journal article" date="2010" name="Cell">
        <title>A tissue-specific atlas of mouse protein phosphorylation and expression.</title>
        <authorList>
            <person name="Huttlin E.L."/>
            <person name="Jedrychowski M.P."/>
            <person name="Elias J.E."/>
            <person name="Goswami T."/>
            <person name="Rad R."/>
            <person name="Beausoleil S.A."/>
            <person name="Villen J."/>
            <person name="Haas W."/>
            <person name="Sowa M.E."/>
            <person name="Gygi S.P."/>
        </authorList>
    </citation>
    <scope>PHOSPHORYLATION [LARGE SCALE ANALYSIS] AT SER-22; SER-347; THR-351; SER-468; SER-748; SER-874 AND SER-875</scope>
    <scope>IDENTIFICATION BY MASS SPECTROMETRY [LARGE SCALE ANALYSIS]</scope>
    <source>
        <tissue>Brain</tissue>
        <tissue>Brown adipose tissue</tissue>
        <tissue>Heart</tissue>
        <tissue>Kidney</tissue>
        <tissue>Liver</tissue>
        <tissue>Lung</tissue>
        <tissue>Pancreas</tissue>
        <tissue>Spleen</tissue>
        <tissue>Testis</tissue>
    </source>
</reference>